<sequence>MIKIYRMKFKKFVFKFIDHDKRNFTVVCVNVYANKATHEFAHDNDFSKKLEWKIKHFKHAHALERRIHQLVKETYFRESTGSLDQFADFKSVKVCVKDKIVKINLGENQEGNPVYKQVKSVSKHYHVFVRGTKPLNRREKGAYTHSMKVHDIHLTGNLDQGLEFAELCNFSIPESGIHSVQSQSSVTQSLNGQNVNPGAVVTGGDNWLSATNNANWNSTANTNAAWNSMNRNSVAQNSASKNANNWNSAANSAVKSSQNNNLSAMNNSLYNNNKAVNTNTINSTNNRNVSSQNNANRNASMATTYNNSVNSANSINTANTRSQTGGQDEEDFEKKYKKYKNKYAKLKNQKTSNF</sequence>
<protein>
    <recommendedName>
        <fullName>Uncharacterized protein R692</fullName>
    </recommendedName>
</protein>
<organismHost>
    <name type="scientific">Acanthamoeba polyphaga</name>
    <name type="common">Amoeba</name>
    <dbReference type="NCBI Taxonomy" id="5757"/>
</organismHost>
<accession>Q5UNV0</accession>
<comment type="subcellular location">
    <subcellularLocation>
        <location evidence="3">Virion</location>
    </subcellularLocation>
</comment>
<evidence type="ECO:0000255" key="1"/>
<evidence type="ECO:0000256" key="2">
    <source>
        <dbReference type="SAM" id="MobiDB-lite"/>
    </source>
</evidence>
<evidence type="ECO:0000269" key="3">
    <source>
    </source>
</evidence>
<gene>
    <name type="ordered locus">MIMI_R692</name>
</gene>
<keyword id="KW-0175">Coiled coil</keyword>
<keyword id="KW-1185">Reference proteome</keyword>
<keyword id="KW-0946">Virion</keyword>
<name>YR692_MIMIV</name>
<dbReference type="EMBL" id="AY653733">
    <property type="protein sequence ID" value="AAV50953.1"/>
    <property type="molecule type" value="Genomic_DNA"/>
</dbReference>
<dbReference type="KEGG" id="vg:9925344"/>
<dbReference type="Proteomes" id="UP000001134">
    <property type="component" value="Genome"/>
</dbReference>
<dbReference type="GO" id="GO:0044423">
    <property type="term" value="C:virion component"/>
    <property type="evidence" value="ECO:0007669"/>
    <property type="project" value="UniProtKB-KW"/>
</dbReference>
<reference key="1">
    <citation type="journal article" date="2004" name="Science">
        <title>The 1.2-megabase genome sequence of Mimivirus.</title>
        <authorList>
            <person name="Raoult D."/>
            <person name="Audic S."/>
            <person name="Robert C."/>
            <person name="Abergel C."/>
            <person name="Renesto P."/>
            <person name="Ogata H."/>
            <person name="La Scola B."/>
            <person name="Susan M."/>
            <person name="Claverie J.-M."/>
        </authorList>
    </citation>
    <scope>NUCLEOTIDE SEQUENCE [LARGE SCALE GENOMIC DNA]</scope>
    <source>
        <strain>Rowbotham-Bradford</strain>
    </source>
</reference>
<reference key="2">
    <citation type="journal article" date="2006" name="J. Virol.">
        <title>Mimivirus giant particles incorporate a large fraction of anonymous and unique gene products.</title>
        <authorList>
            <person name="Renesto P."/>
            <person name="Abergel C."/>
            <person name="Decloquement P."/>
            <person name="Moinier D."/>
            <person name="Azza S."/>
            <person name="Ogata H."/>
            <person name="Fourquet P."/>
            <person name="Gorvel J.-P."/>
            <person name="Claverie J.-M."/>
            <person name="Raoult D."/>
        </authorList>
    </citation>
    <scope>IDENTIFICATION BY MASS SPECTROMETRY [LARGE SCALE ANALYSIS]</scope>
    <scope>SUBCELLULAR LOCATION</scope>
</reference>
<organism>
    <name type="scientific">Acanthamoeba polyphaga mimivirus</name>
    <name type="common">APMV</name>
    <dbReference type="NCBI Taxonomy" id="212035"/>
    <lineage>
        <taxon>Viruses</taxon>
        <taxon>Varidnaviria</taxon>
        <taxon>Bamfordvirae</taxon>
        <taxon>Nucleocytoviricota</taxon>
        <taxon>Megaviricetes</taxon>
        <taxon>Imitervirales</taxon>
        <taxon>Mimiviridae</taxon>
        <taxon>Megamimivirinae</taxon>
        <taxon>Mimivirus</taxon>
        <taxon>Mimivirus bradfordmassiliense</taxon>
    </lineage>
</organism>
<proteinExistence type="evidence at protein level"/>
<feature type="chain" id="PRO_0000071322" description="Uncharacterized protein R692">
    <location>
        <begin position="1"/>
        <end position="354"/>
    </location>
</feature>
<feature type="region of interest" description="Disordered" evidence="2">
    <location>
        <begin position="309"/>
        <end position="333"/>
    </location>
</feature>
<feature type="coiled-coil region" evidence="1">
    <location>
        <begin position="326"/>
        <end position="353"/>
    </location>
</feature>
<feature type="compositionally biased region" description="Polar residues" evidence="2">
    <location>
        <begin position="309"/>
        <end position="326"/>
    </location>
</feature>